<evidence type="ECO:0000255" key="1">
    <source>
        <dbReference type="HAMAP-Rule" id="MF_01875"/>
    </source>
</evidence>
<evidence type="ECO:0000256" key="2">
    <source>
        <dbReference type="SAM" id="MobiDB-lite"/>
    </source>
</evidence>
<protein>
    <recommendedName>
        <fullName evidence="1">Non-homologous end joining protein Ku</fullName>
    </recommendedName>
</protein>
<keyword id="KW-0227">DNA damage</keyword>
<keyword id="KW-0233">DNA recombination</keyword>
<keyword id="KW-0234">DNA repair</keyword>
<keyword id="KW-0238">DNA-binding</keyword>
<keyword id="KW-1185">Reference proteome</keyword>
<accession>Q0JYN7</accession>
<organism>
    <name type="scientific">Cupriavidus necator (strain ATCC 17699 / DSM 428 / KCTC 22496 / NCIMB 10442 / H16 / Stanier 337)</name>
    <name type="common">Ralstonia eutropha</name>
    <dbReference type="NCBI Taxonomy" id="381666"/>
    <lineage>
        <taxon>Bacteria</taxon>
        <taxon>Pseudomonadati</taxon>
        <taxon>Pseudomonadota</taxon>
        <taxon>Betaproteobacteria</taxon>
        <taxon>Burkholderiales</taxon>
        <taxon>Burkholderiaceae</taxon>
        <taxon>Cupriavidus</taxon>
    </lineage>
</organism>
<proteinExistence type="inferred from homology"/>
<gene>
    <name evidence="1" type="primary">ku</name>
    <name type="ordered locus">H16_B2355</name>
</gene>
<comment type="function">
    <text evidence="1">With LigD forms a non-homologous end joining (NHEJ) DNA repair enzyme, which repairs dsDNA breaks with reduced fidelity. Binds linear dsDNA with 5'- and 3'- overhangs but not closed circular dsDNA nor ssDNA. Recruits and stimulates the ligase activity of LigD.</text>
</comment>
<comment type="subunit">
    <text evidence="1">Homodimer. Interacts with LigD.</text>
</comment>
<comment type="similarity">
    <text evidence="1">Belongs to the prokaryotic Ku family.</text>
</comment>
<reference key="1">
    <citation type="journal article" date="2006" name="Nat. Biotechnol.">
        <title>Genome sequence of the bioplastic-producing 'Knallgas' bacterium Ralstonia eutropha H16.</title>
        <authorList>
            <person name="Pohlmann A."/>
            <person name="Fricke W.F."/>
            <person name="Reinecke F."/>
            <person name="Kusian B."/>
            <person name="Liesegang H."/>
            <person name="Cramm R."/>
            <person name="Eitinger T."/>
            <person name="Ewering C."/>
            <person name="Poetter M."/>
            <person name="Schwartz E."/>
            <person name="Strittmatter A."/>
            <person name="Voss I."/>
            <person name="Gottschalk G."/>
            <person name="Steinbuechel A."/>
            <person name="Friedrich B."/>
            <person name="Bowien B."/>
        </authorList>
    </citation>
    <scope>NUCLEOTIDE SEQUENCE [LARGE SCALE GENOMIC DNA]</scope>
    <source>
        <strain>ATCC 17699 / DSM 428 / KCTC 22496 / NCIMB 10442 / H16 / Stanier 337</strain>
    </source>
</reference>
<dbReference type="EMBL" id="AM260480">
    <property type="protein sequence ID" value="CAJ97137.1"/>
    <property type="molecule type" value="Genomic_DNA"/>
</dbReference>
<dbReference type="RefSeq" id="WP_010810674.1">
    <property type="nucleotide sequence ID" value="NZ_CP039288.1"/>
</dbReference>
<dbReference type="SMR" id="Q0JYN7"/>
<dbReference type="STRING" id="381666.H16_B2355"/>
<dbReference type="KEGG" id="reh:H16_B2355"/>
<dbReference type="eggNOG" id="COG1273">
    <property type="taxonomic scope" value="Bacteria"/>
</dbReference>
<dbReference type="HOGENOM" id="CLU_048975_2_0_4"/>
<dbReference type="OrthoDB" id="9795084at2"/>
<dbReference type="Proteomes" id="UP000008210">
    <property type="component" value="Chromosome 2"/>
</dbReference>
<dbReference type="GO" id="GO:0003690">
    <property type="term" value="F:double-stranded DNA binding"/>
    <property type="evidence" value="ECO:0007669"/>
    <property type="project" value="UniProtKB-UniRule"/>
</dbReference>
<dbReference type="GO" id="GO:0006310">
    <property type="term" value="P:DNA recombination"/>
    <property type="evidence" value="ECO:0007669"/>
    <property type="project" value="UniProtKB-KW"/>
</dbReference>
<dbReference type="GO" id="GO:0006303">
    <property type="term" value="P:double-strand break repair via nonhomologous end joining"/>
    <property type="evidence" value="ECO:0007669"/>
    <property type="project" value="UniProtKB-UniRule"/>
</dbReference>
<dbReference type="CDD" id="cd00789">
    <property type="entry name" value="KU_like"/>
    <property type="match status" value="1"/>
</dbReference>
<dbReference type="Gene3D" id="2.40.290.10">
    <property type="match status" value="1"/>
</dbReference>
<dbReference type="HAMAP" id="MF_01875">
    <property type="entry name" value="Prokaryotic_Ku"/>
    <property type="match status" value="1"/>
</dbReference>
<dbReference type="InterPro" id="IPR006164">
    <property type="entry name" value="Ku70/Ku80_beta-barrel_dom"/>
</dbReference>
<dbReference type="InterPro" id="IPR009187">
    <property type="entry name" value="Prok_Ku"/>
</dbReference>
<dbReference type="InterPro" id="IPR016194">
    <property type="entry name" value="SPOC-like_C_dom_sf"/>
</dbReference>
<dbReference type="NCBIfam" id="TIGR02772">
    <property type="entry name" value="Ku_bact"/>
    <property type="match status" value="1"/>
</dbReference>
<dbReference type="PANTHER" id="PTHR41251">
    <property type="entry name" value="NON-HOMOLOGOUS END JOINING PROTEIN KU"/>
    <property type="match status" value="1"/>
</dbReference>
<dbReference type="PANTHER" id="PTHR41251:SF1">
    <property type="entry name" value="NON-HOMOLOGOUS END JOINING PROTEIN KU"/>
    <property type="match status" value="1"/>
</dbReference>
<dbReference type="Pfam" id="PF02735">
    <property type="entry name" value="Ku"/>
    <property type="match status" value="1"/>
</dbReference>
<dbReference type="PIRSF" id="PIRSF006493">
    <property type="entry name" value="Prok_Ku"/>
    <property type="match status" value="1"/>
</dbReference>
<dbReference type="SMART" id="SM00559">
    <property type="entry name" value="Ku78"/>
    <property type="match status" value="1"/>
</dbReference>
<dbReference type="SUPFAM" id="SSF100939">
    <property type="entry name" value="SPOC domain-like"/>
    <property type="match status" value="1"/>
</dbReference>
<sequence>MSRIIWKGAITFGLVNIPVVLRPASRSQTLDLDLLDVRDMAPVGYQRINKSTGKPVDKEYIVKGYQYAKDEYVLLNEEDFRQANVEATQTVDIVSFVDAQSIPPYYFDTPYYLEPDKRGERGYALLHETMRRTGRAALALVVLRARQHLAAMLVHGDALVLNTMRFADEVLPISELRLPKATTGKPTGAHAREIEMATKLVEDMSEDWEPEQYRDSYRDDLMARIEEKIDSGKTHQLTPPAEEEEAPRQGAKVIDMVALLRQSLGQRGKEDKEDATPARRKAPARHAAARKQPAAKRAATPPAKRASTAAKTKRAPAKRESHAPAARKSSSTTRRKHAA</sequence>
<feature type="chain" id="PRO_0000389193" description="Non-homologous end joining protein Ku">
    <location>
        <begin position="1"/>
        <end position="339"/>
    </location>
</feature>
<feature type="domain" description="Ku" evidence="1">
    <location>
        <begin position="10"/>
        <end position="187"/>
    </location>
</feature>
<feature type="region of interest" description="Disordered" evidence="2">
    <location>
        <begin position="230"/>
        <end position="251"/>
    </location>
</feature>
<feature type="region of interest" description="Disordered" evidence="2">
    <location>
        <begin position="263"/>
        <end position="339"/>
    </location>
</feature>
<feature type="compositionally biased region" description="Basic and acidic residues" evidence="2">
    <location>
        <begin position="267"/>
        <end position="277"/>
    </location>
</feature>
<feature type="compositionally biased region" description="Basic residues" evidence="2">
    <location>
        <begin position="278"/>
        <end position="289"/>
    </location>
</feature>
<feature type="compositionally biased region" description="Low complexity" evidence="2">
    <location>
        <begin position="290"/>
        <end position="310"/>
    </location>
</feature>
<name>KU_CUPNH</name>